<reference key="1">
    <citation type="journal article" date="1998" name="Biochem. Biophys. Res. Commun.">
        <title>Cytokine induced expression of porcine inhibitor of apoptosis protein (iap) family member is regulated by NF-kappa B.</title>
        <authorList>
            <person name="Stehlik C."/>
            <person name="de Martin R."/>
            <person name="Binder B.R."/>
            <person name="Lipp J."/>
        </authorList>
    </citation>
    <scope>NUCLEOTIDE SEQUENCE [MRNA]</scope>
    <source>
        <tissue>Aorta</tissue>
    </source>
</reference>
<organism>
    <name type="scientific">Sus scrofa</name>
    <name type="common">Pig</name>
    <dbReference type="NCBI Taxonomy" id="9823"/>
    <lineage>
        <taxon>Eukaryota</taxon>
        <taxon>Metazoa</taxon>
        <taxon>Chordata</taxon>
        <taxon>Craniata</taxon>
        <taxon>Vertebrata</taxon>
        <taxon>Euteleostomi</taxon>
        <taxon>Mammalia</taxon>
        <taxon>Eutheria</taxon>
        <taxon>Laurasiatheria</taxon>
        <taxon>Artiodactyla</taxon>
        <taxon>Suina</taxon>
        <taxon>Suidae</taxon>
        <taxon>Sus</taxon>
    </lineage>
</organism>
<keyword id="KW-0053">Apoptosis</keyword>
<keyword id="KW-0479">Metal-binding</keyword>
<keyword id="KW-1185">Reference proteome</keyword>
<keyword id="KW-0677">Repeat</keyword>
<keyword id="KW-0862">Zinc</keyword>
<keyword id="KW-0863">Zinc-finger</keyword>
<proteinExistence type="evidence at transcript level"/>
<accession>O62640</accession>
<evidence type="ECO:0000255" key="1">
    <source>
        <dbReference type="PROSITE-ProRule" id="PRU00029"/>
    </source>
</evidence>
<evidence type="ECO:0000255" key="2">
    <source>
        <dbReference type="PROSITE-ProRule" id="PRU00046"/>
    </source>
</evidence>
<evidence type="ECO:0000255" key="3">
    <source>
        <dbReference type="PROSITE-ProRule" id="PRU00175"/>
    </source>
</evidence>
<evidence type="ECO:0000305" key="4"/>
<name>PIAP_PIG</name>
<feature type="chain" id="PRO_0000122366" description="Putative inhibitor of apoptosis">
    <location>
        <begin position="1"/>
        <end position="358"/>
    </location>
</feature>
<feature type="repeat" description="BIR 1">
    <location>
        <begin position="4"/>
        <end position="70"/>
    </location>
</feature>
<feature type="repeat" description="BIR 2">
    <location>
        <begin position="90"/>
        <end position="157"/>
    </location>
</feature>
<feature type="domain" description="CARD" evidence="2">
    <location>
        <begin position="193"/>
        <end position="283"/>
    </location>
</feature>
<feature type="zinc finger region" description="RING-type" evidence="3">
    <location>
        <begin position="311"/>
        <end position="346"/>
    </location>
</feature>
<feature type="binding site" evidence="1">
    <location>
        <position position="127"/>
    </location>
    <ligand>
        <name>Zn(2+)</name>
        <dbReference type="ChEBI" id="CHEBI:29105"/>
    </ligand>
</feature>
<feature type="binding site" evidence="1">
    <location>
        <position position="130"/>
    </location>
    <ligand>
        <name>Zn(2+)</name>
        <dbReference type="ChEBI" id="CHEBI:29105"/>
    </ligand>
</feature>
<feature type="binding site" evidence="1">
    <location>
        <position position="147"/>
    </location>
    <ligand>
        <name>Zn(2+)</name>
        <dbReference type="ChEBI" id="CHEBI:29105"/>
    </ligand>
</feature>
<feature type="binding site" evidence="1">
    <location>
        <position position="154"/>
    </location>
    <ligand>
        <name>Zn(2+)</name>
        <dbReference type="ChEBI" id="CHEBI:29105"/>
    </ligand>
</feature>
<dbReference type="EMBL" id="U79142">
    <property type="protein sequence ID" value="AAC39171.1"/>
    <property type="molecule type" value="mRNA"/>
</dbReference>
<dbReference type="PIR" id="JC5964">
    <property type="entry name" value="JC5964"/>
</dbReference>
<dbReference type="SMR" id="O62640"/>
<dbReference type="FunCoup" id="O62640">
    <property type="interactions" value="65"/>
</dbReference>
<dbReference type="PaxDb" id="9823-ENSSSCP00000020932"/>
<dbReference type="Ensembl" id="ENSSSCT00115008524">
    <property type="protein sequence ID" value="ENSSSCP00115008005"/>
    <property type="gene ID" value="ENSSSCG00115004954"/>
</dbReference>
<dbReference type="eggNOG" id="KOG1101">
    <property type="taxonomic scope" value="Eukaryota"/>
</dbReference>
<dbReference type="HOGENOM" id="CLU_016347_1_0_1"/>
<dbReference type="InParanoid" id="O62640"/>
<dbReference type="TreeFam" id="TF105356"/>
<dbReference type="Reactome" id="R-SSC-5357786">
    <property type="pathway name" value="TNFR1-induced proapoptotic signaling"/>
</dbReference>
<dbReference type="Reactome" id="R-SSC-5357905">
    <property type="pathway name" value="Regulation of TNFR1 signaling"/>
</dbReference>
<dbReference type="Reactome" id="R-SSC-5357956">
    <property type="pathway name" value="TNFR1-induced NF-kappa-B signaling pathway"/>
</dbReference>
<dbReference type="Reactome" id="R-SSC-5668541">
    <property type="pathway name" value="TNFR2 non-canonical NF-kB pathway"/>
</dbReference>
<dbReference type="Reactome" id="R-SSC-5675482">
    <property type="pathway name" value="Regulation of necroptotic cell death"/>
</dbReference>
<dbReference type="Reactome" id="R-SSC-5676594">
    <property type="pathway name" value="TNF receptor superfamily (TNFSF) members mediating non-canonical NF-kB pathway"/>
</dbReference>
<dbReference type="Reactome" id="R-SSC-5689880">
    <property type="pathway name" value="Ub-specific processing proteases"/>
</dbReference>
<dbReference type="Reactome" id="R-SSC-937041">
    <property type="pathway name" value="IKK complex recruitment mediated by RIP1"/>
</dbReference>
<dbReference type="Proteomes" id="UP000008227">
    <property type="component" value="Unplaced"/>
</dbReference>
<dbReference type="Proteomes" id="UP000314985">
    <property type="component" value="Unplaced"/>
</dbReference>
<dbReference type="Proteomes" id="UP000694570">
    <property type="component" value="Unplaced"/>
</dbReference>
<dbReference type="Proteomes" id="UP000694571">
    <property type="component" value="Unplaced"/>
</dbReference>
<dbReference type="Proteomes" id="UP000694720">
    <property type="component" value="Unplaced"/>
</dbReference>
<dbReference type="Proteomes" id="UP000694722">
    <property type="component" value="Unplaced"/>
</dbReference>
<dbReference type="Proteomes" id="UP000694723">
    <property type="component" value="Unplaced"/>
</dbReference>
<dbReference type="Proteomes" id="UP000694724">
    <property type="component" value="Unplaced"/>
</dbReference>
<dbReference type="Proteomes" id="UP000694725">
    <property type="component" value="Unplaced"/>
</dbReference>
<dbReference type="Proteomes" id="UP000694726">
    <property type="component" value="Unplaced"/>
</dbReference>
<dbReference type="Proteomes" id="UP000694727">
    <property type="component" value="Unplaced"/>
</dbReference>
<dbReference type="Proteomes" id="UP000694728">
    <property type="component" value="Unplaced"/>
</dbReference>
<dbReference type="GO" id="GO:0005737">
    <property type="term" value="C:cytoplasm"/>
    <property type="evidence" value="ECO:0000318"/>
    <property type="project" value="GO_Central"/>
</dbReference>
<dbReference type="GO" id="GO:0005634">
    <property type="term" value="C:nucleus"/>
    <property type="evidence" value="ECO:0000318"/>
    <property type="project" value="GO_Central"/>
</dbReference>
<dbReference type="GO" id="GO:0043027">
    <property type="term" value="F:cysteine-type endopeptidase inhibitor activity involved in apoptotic process"/>
    <property type="evidence" value="ECO:0000318"/>
    <property type="project" value="GO_Central"/>
</dbReference>
<dbReference type="GO" id="GO:0061630">
    <property type="term" value="F:ubiquitin protein ligase activity"/>
    <property type="evidence" value="ECO:0000318"/>
    <property type="project" value="GO_Central"/>
</dbReference>
<dbReference type="GO" id="GO:0008270">
    <property type="term" value="F:zinc ion binding"/>
    <property type="evidence" value="ECO:0007669"/>
    <property type="project" value="UniProtKB-KW"/>
</dbReference>
<dbReference type="GO" id="GO:0006915">
    <property type="term" value="P:apoptotic process"/>
    <property type="evidence" value="ECO:0007669"/>
    <property type="project" value="UniProtKB-KW"/>
</dbReference>
<dbReference type="GO" id="GO:0043066">
    <property type="term" value="P:negative regulation of apoptotic process"/>
    <property type="evidence" value="ECO:0000318"/>
    <property type="project" value="GO_Central"/>
</dbReference>
<dbReference type="GO" id="GO:0060546">
    <property type="term" value="P:negative regulation of necroptotic process"/>
    <property type="evidence" value="ECO:0000318"/>
    <property type="project" value="GO_Central"/>
</dbReference>
<dbReference type="GO" id="GO:0031398">
    <property type="term" value="P:positive regulation of protein ubiquitination"/>
    <property type="evidence" value="ECO:0000318"/>
    <property type="project" value="GO_Central"/>
</dbReference>
<dbReference type="GO" id="GO:0051726">
    <property type="term" value="P:regulation of cell cycle"/>
    <property type="evidence" value="ECO:0000318"/>
    <property type="project" value="GO_Central"/>
</dbReference>
<dbReference type="CDD" id="cd00022">
    <property type="entry name" value="BIR"/>
    <property type="match status" value="2"/>
</dbReference>
<dbReference type="CDD" id="cd08329">
    <property type="entry name" value="CARD_BIRC2_BIRC3"/>
    <property type="match status" value="1"/>
</dbReference>
<dbReference type="CDD" id="cd16713">
    <property type="entry name" value="RING-HC_BIRC2_3_7"/>
    <property type="match status" value="1"/>
</dbReference>
<dbReference type="FunFam" id="1.10.1170.10:FF:000005">
    <property type="entry name" value="Baculoviral IAP repeat containing 2"/>
    <property type="match status" value="1"/>
</dbReference>
<dbReference type="FunFam" id="1.10.1170.10:FF:000006">
    <property type="entry name" value="Baculoviral IAP repeat containing 2"/>
    <property type="match status" value="1"/>
</dbReference>
<dbReference type="FunFam" id="3.30.40.10:FF:000184">
    <property type="entry name" value="Baculoviral IAP repeat containing 2"/>
    <property type="match status" value="1"/>
</dbReference>
<dbReference type="FunFam" id="1.10.1170.10:FF:000002">
    <property type="entry name" value="Baculoviral IAP repeat containing 7"/>
    <property type="match status" value="1"/>
</dbReference>
<dbReference type="FunFam" id="1.10.533.10:FF:000012">
    <property type="entry name" value="baculoviral IAP repeat-containing protein 2"/>
    <property type="match status" value="1"/>
</dbReference>
<dbReference type="Gene3D" id="1.10.533.10">
    <property type="entry name" value="Death Domain, Fas"/>
    <property type="match status" value="1"/>
</dbReference>
<dbReference type="Gene3D" id="1.10.1170.10">
    <property type="entry name" value="Inhibitor Of Apoptosis Protein (2mihbC-IAP-1), Chain A"/>
    <property type="match status" value="2"/>
</dbReference>
<dbReference type="Gene3D" id="3.30.40.10">
    <property type="entry name" value="Zinc/RING finger domain, C3HC4 (zinc finger)"/>
    <property type="match status" value="1"/>
</dbReference>
<dbReference type="InterPro" id="IPR001370">
    <property type="entry name" value="BIR_rpt"/>
</dbReference>
<dbReference type="InterPro" id="IPR001315">
    <property type="entry name" value="CARD"/>
</dbReference>
<dbReference type="InterPro" id="IPR011029">
    <property type="entry name" value="DEATH-like_dom_sf"/>
</dbReference>
<dbReference type="InterPro" id="IPR050784">
    <property type="entry name" value="IAP"/>
</dbReference>
<dbReference type="InterPro" id="IPR001841">
    <property type="entry name" value="Znf_RING"/>
</dbReference>
<dbReference type="InterPro" id="IPR013083">
    <property type="entry name" value="Znf_RING/FYVE/PHD"/>
</dbReference>
<dbReference type="PANTHER" id="PTHR10044:SF178">
    <property type="entry name" value="BACULOVIRAL IAP REPEAT-CONTAINING PROTEIN 3"/>
    <property type="match status" value="1"/>
</dbReference>
<dbReference type="PANTHER" id="PTHR10044">
    <property type="entry name" value="INHIBITOR OF APOPTOSIS"/>
    <property type="match status" value="1"/>
</dbReference>
<dbReference type="Pfam" id="PF00653">
    <property type="entry name" value="BIR"/>
    <property type="match status" value="2"/>
</dbReference>
<dbReference type="Pfam" id="PF00619">
    <property type="entry name" value="CARD"/>
    <property type="match status" value="1"/>
</dbReference>
<dbReference type="Pfam" id="PF13920">
    <property type="entry name" value="zf-C3HC4_3"/>
    <property type="match status" value="1"/>
</dbReference>
<dbReference type="SMART" id="SM00238">
    <property type="entry name" value="BIR"/>
    <property type="match status" value="2"/>
</dbReference>
<dbReference type="SMART" id="SM00114">
    <property type="entry name" value="CARD"/>
    <property type="match status" value="1"/>
</dbReference>
<dbReference type="SMART" id="SM00184">
    <property type="entry name" value="RING"/>
    <property type="match status" value="1"/>
</dbReference>
<dbReference type="SUPFAM" id="SSF47986">
    <property type="entry name" value="DEATH domain"/>
    <property type="match status" value="1"/>
</dbReference>
<dbReference type="SUPFAM" id="SSF57924">
    <property type="entry name" value="Inhibitor of apoptosis (IAP) repeat"/>
    <property type="match status" value="2"/>
</dbReference>
<dbReference type="PROSITE" id="PS01282">
    <property type="entry name" value="BIR_REPEAT_1"/>
    <property type="match status" value="2"/>
</dbReference>
<dbReference type="PROSITE" id="PS50143">
    <property type="entry name" value="BIR_REPEAT_2"/>
    <property type="match status" value="2"/>
</dbReference>
<dbReference type="PROSITE" id="PS50209">
    <property type="entry name" value="CARD"/>
    <property type="match status" value="1"/>
</dbReference>
<dbReference type="PROSITE" id="PS50089">
    <property type="entry name" value="ZF_RING_2"/>
    <property type="match status" value="1"/>
</dbReference>
<sequence length="358" mass="40977">MNTEKDRLLTFQMWPLTFLSPADLAKAGFYYIGPGDRVACFACGGKLSNWEPKDDAMTEHLRHFPNCPFLGNQLQDSSRYTVSNLSMQTYAARFKTFCNWPSSIPVHPEQLASAGFYYMGHSDDVKCFCCDGGLRCWESGDDPWVEHAKWFPRCEYLIRIKGQEFISRVQASYPHLLEQLLSTSDNPEDENAEPPNDLSLIRKNRMALFQHLTCVLPILDSLLIARVISEQEHDVIKQKTQTSLQARELIDIILVKGNYAATIFKNSLQEIDPMLYKHLFVQQDIKYIPTENVSDLSMEEQLRRLQEERTCKVCMDKEVSIVFIPCGHLVVCKDCAPSLRKCPICRGTIKGTVRTFLS</sequence>
<gene>
    <name type="primary">PIAP</name>
</gene>
<comment type="similarity">
    <text evidence="4">Belongs to the IAP family.</text>
</comment>
<protein>
    <recommendedName>
        <fullName>Putative inhibitor of apoptosis</fullName>
    </recommendedName>
</protein>